<proteinExistence type="inferred from homology"/>
<organism>
    <name type="scientific">Glycine max</name>
    <name type="common">Soybean</name>
    <name type="synonym">Glycine hispida</name>
    <dbReference type="NCBI Taxonomy" id="3847"/>
    <lineage>
        <taxon>Eukaryota</taxon>
        <taxon>Viridiplantae</taxon>
        <taxon>Streptophyta</taxon>
        <taxon>Embryophyta</taxon>
        <taxon>Tracheophyta</taxon>
        <taxon>Spermatophyta</taxon>
        <taxon>Magnoliopsida</taxon>
        <taxon>eudicotyledons</taxon>
        <taxon>Gunneridae</taxon>
        <taxon>Pentapetalae</taxon>
        <taxon>rosids</taxon>
        <taxon>fabids</taxon>
        <taxon>Fabales</taxon>
        <taxon>Fabaceae</taxon>
        <taxon>Papilionoideae</taxon>
        <taxon>50 kb inversion clade</taxon>
        <taxon>NPAAA clade</taxon>
        <taxon>indigoferoid/millettioid clade</taxon>
        <taxon>Phaseoleae</taxon>
        <taxon>Glycine</taxon>
        <taxon>Glycine subgen. Soja</taxon>
    </lineage>
</organism>
<accession>Q8HVY3</accession>
<accession>Q2PMT3</accession>
<evidence type="ECO:0000255" key="1">
    <source>
        <dbReference type="HAMAP-Rule" id="MF_01324"/>
    </source>
</evidence>
<evidence type="ECO:0000305" key="2"/>
<feature type="chain" id="PRO_0000067950" description="DNA-directed RNA polymerase subunit beta''">
    <location>
        <begin position="1"/>
        <end position="1386"/>
    </location>
</feature>
<feature type="binding site" evidence="1">
    <location>
        <position position="220"/>
    </location>
    <ligand>
        <name>Zn(2+)</name>
        <dbReference type="ChEBI" id="CHEBI:29105"/>
    </ligand>
</feature>
<feature type="binding site" evidence="1">
    <location>
        <position position="291"/>
    </location>
    <ligand>
        <name>Zn(2+)</name>
        <dbReference type="ChEBI" id="CHEBI:29105"/>
    </ligand>
</feature>
<feature type="binding site" evidence="1">
    <location>
        <position position="298"/>
    </location>
    <ligand>
        <name>Zn(2+)</name>
        <dbReference type="ChEBI" id="CHEBI:29105"/>
    </ligand>
</feature>
<feature type="binding site" evidence="1">
    <location>
        <position position="301"/>
    </location>
    <ligand>
        <name>Zn(2+)</name>
        <dbReference type="ChEBI" id="CHEBI:29105"/>
    </ligand>
</feature>
<feature type="sequence conflict" description="In Ref. 1; AAL07336." evidence="2" ref="1">
    <original>L</original>
    <variation>F</variation>
    <location>
        <position position="80"/>
    </location>
</feature>
<feature type="sequence conflict" description="In Ref. 1; AAL07336." evidence="2" ref="1">
    <original>R</original>
    <variation>S</variation>
    <location>
        <position position="883"/>
    </location>
</feature>
<feature type="sequence conflict" description="In Ref. 1; AAL07336." evidence="2" ref="1">
    <original>NPPGSRFILDNESDRTTI</original>
    <variation>DPSSEKKEGSDHTNM</variation>
    <location>
        <begin position="887"/>
        <end position="904"/>
    </location>
</feature>
<feature type="sequence conflict" description="In Ref. 1; AAL07336." evidence="2" ref="1">
    <original>FSIDSREKIQQSLSKNHGTIRMLLNRNEKCRSLI</original>
    <variation>YSIYIYPKTKLQKSFNQNQGTVRTLLGINKECQFFL</variation>
    <location>
        <begin position="908"/>
        <end position="941"/>
    </location>
</feature>
<feature type="sequence conflict" description="In Ref. 1; AAL07336." evidence="2" ref="1">
    <original>SET</original>
    <variation>R</variation>
    <location>
        <begin position="1347"/>
        <end position="1349"/>
    </location>
</feature>
<feature type="sequence conflict" description="In Ref. 1; AAL07336." evidence="2" ref="1">
    <original>FFFFV</original>
    <variation>LILLI</variation>
    <location>
        <begin position="1369"/>
        <end position="1373"/>
    </location>
</feature>
<feature type="sequence conflict" description="In Ref. 1; AAL07336." evidence="2" ref="1">
    <original>SQQSSI</original>
    <variation>LQI</variation>
    <location>
        <begin position="1381"/>
        <end position="1386"/>
    </location>
</feature>
<reference key="1">
    <citation type="submission" date="2000-07" db="EMBL/GenBank/DDBJ databases">
        <title>Sequence of rpoBC gene cluster.</title>
        <authorList>
            <person name="Min-Gu L."/>
            <person name="Hoon-Seok Y."/>
            <person name="Jeong-Kook K."/>
        </authorList>
    </citation>
    <scope>NUCLEOTIDE SEQUENCE [GENOMIC DNA]</scope>
</reference>
<reference key="2">
    <citation type="journal article" date="2005" name="Plant Mol. Biol.">
        <title>Complete chloroplast genome sequence of Glycine max and comparative analyses with other legume genomes.</title>
        <authorList>
            <person name="Saski C."/>
            <person name="Lee S.-B."/>
            <person name="Daniell H."/>
            <person name="Wood T.C."/>
            <person name="Tomkins J."/>
            <person name="Kim H.-G."/>
            <person name="Jansen R.K."/>
        </authorList>
    </citation>
    <scope>NUCLEOTIDE SEQUENCE [LARGE SCALE GENOMIC DNA]</scope>
    <source>
        <strain>cv. PI 437654</strain>
    </source>
</reference>
<name>RPOC2_SOYBN</name>
<comment type="function">
    <text evidence="1">DNA-dependent RNA polymerase catalyzes the transcription of DNA into RNA using the four ribonucleoside triphosphates as substrates.</text>
</comment>
<comment type="catalytic activity">
    <reaction evidence="1">
        <text>RNA(n) + a ribonucleoside 5'-triphosphate = RNA(n+1) + diphosphate</text>
        <dbReference type="Rhea" id="RHEA:21248"/>
        <dbReference type="Rhea" id="RHEA-COMP:14527"/>
        <dbReference type="Rhea" id="RHEA-COMP:17342"/>
        <dbReference type="ChEBI" id="CHEBI:33019"/>
        <dbReference type="ChEBI" id="CHEBI:61557"/>
        <dbReference type="ChEBI" id="CHEBI:140395"/>
        <dbReference type="EC" id="2.7.7.6"/>
    </reaction>
</comment>
<comment type="cofactor">
    <cofactor evidence="1">
        <name>Zn(2+)</name>
        <dbReference type="ChEBI" id="CHEBI:29105"/>
    </cofactor>
    <text evidence="1">Binds 1 Zn(2+) ion per subunit.</text>
</comment>
<comment type="subunit">
    <text evidence="1">In plastids the minimal PEP RNA polymerase catalytic core is composed of four subunits: alpha, beta, beta', and beta''. When a (nuclear-encoded) sigma factor is associated with the core the holoenzyme is formed, which can initiate transcription.</text>
</comment>
<comment type="subcellular location">
    <subcellularLocation>
        <location evidence="1">Plastid</location>
        <location evidence="1">Chloroplast</location>
    </subcellularLocation>
</comment>
<comment type="similarity">
    <text evidence="1">Belongs to the RNA polymerase beta' chain family. RpoC2 subfamily.</text>
</comment>
<comment type="sequence caution" evidence="2">
    <conflict type="erroneous initiation">
        <sequence resource="EMBL-CDS" id="AAL07336"/>
    </conflict>
    <text>Extended N-terminus.</text>
</comment>
<sequence length="1386" mass="159057">MAERANLVFHNKVIGGTAIKRLISRLIDHFGMAYTSHILDQVKTLGFRQATDTSISLGIDDLLTIPSKGWLVQDAEQQSLILEQHHHYGNVHAVEKLRQSIEIWYATSEYFRQEMNPNFRMTDPFNPVHIMSFSGARGNASQVHQLVGMRGLMSDPQGQMIDLPIQSNLREGLSLTEYIISCYGARKGVVDTAVRTSDAGYLTRRLVEVVQHIVVRRTDCGTIQGISVNTQNGMMPERIWIQTLIGRVLADDIYRGSRCIAVRNQDIGIGLINRFKTLQTQPISIRTPFTCRNTSWICRLCYGQSPTHGHLVELGEAVGIIAGQSIGEPGTQLTLRTFHTGGVFTGGTAEQVRAPYNGKIQFNEDLVHPTRTRHGHPAFLCYIDLYVTIESGDIIHNVTIPPKSFLLVQNNQYVKSEQVIAEIRAGTYTFNLKEKVRKHVYSDLEGEMHWSTDVYHASEFRYSNVHILPKTSHLWILSGKSYRSGSVSFSIRKDQDQMNIHYLSTGERDFCNLLASKKKVRHKLFRFNPSDKKERRISDYSIFNQIISIDHCHFTHPTIFHDTTDLLAKRRRNRLIIPFQFQSIQERDKELMLASSISIEIPINGIFRRNSILAYFDDPQYRTQSSGITKYRTIGINSIFKKEDFLIEYQGVKEFKTKYQIKVDQFFFIPEEVHILPESSSIMVRNNSIVEVDTLITLNIRSRVRGLVRLEKKKKKIELKIFSGDIYFPGEMDKISRHSAVLIPPRTVKKNSKEKKMKNWIYVQWITITKKKYFVLVRPVILYEIADRINLVKLFPQDMFQERDNLELKVINYILSGNGKSIRGISDTSIQLVRTCLVLNWDQDKKFSSIENAHASFVEISIKGLVRYFLRIDLVKSHISYIRKRNNPPGSRFILDNESDRTTINPFFSIDSREKIQQSLSKNHGTIRMLLNRNEKCRSLIILSSSNCFQIRSFNHGKYYNGIKEGINQIQRDAMIPIKNSLGPLGIAPQVAHFDFYRLITHNQISIIKNGQLDKLKETFQVFQYYFLDENERIYKPDLCSNIILNPFYLNWHFLHHNYCEKTFTIMSLGQFICENVCIVQTKNAPHLKSGQILTVQMDSVGIRSANPYLATPGATVHGHYGEILSEGDILVTFIYEKSRSGDITQGLPKVEQVLEVRSIDSISMNLEKRVDTWNGRITKILGIPWGFLIGAELTIAQSRISLVNKIQKVYRSQGVHIHNRHIEIIVRQITSKVLVSEDGMSNVFLPGELIGLLRAERAGRSLEEAICYRVLLLGITKTSLNTQSFISEASFQETARVLSKAALRGRIDWLKGLKENVVLGGMIPVGTGFKRIMNRSKQRQYNKMTSETKKKNLFEGEMRDILFHHREFFFFVSKNLCDTSQQSSI</sequence>
<keyword id="KW-0150">Chloroplast</keyword>
<keyword id="KW-0240">DNA-directed RNA polymerase</keyword>
<keyword id="KW-0479">Metal-binding</keyword>
<keyword id="KW-0548">Nucleotidyltransferase</keyword>
<keyword id="KW-0934">Plastid</keyword>
<keyword id="KW-1185">Reference proteome</keyword>
<keyword id="KW-0804">Transcription</keyword>
<keyword id="KW-0808">Transferase</keyword>
<keyword id="KW-0862">Zinc</keyword>
<gene>
    <name evidence="1" type="primary">rpoC2</name>
</gene>
<geneLocation type="chloroplast"/>
<protein>
    <recommendedName>
        <fullName evidence="1">DNA-directed RNA polymerase subunit beta''</fullName>
        <ecNumber evidence="1">2.7.7.6</ecNumber>
    </recommendedName>
    <alternativeName>
        <fullName evidence="1">PEP</fullName>
    </alternativeName>
    <alternativeName>
        <fullName evidence="1">Plastid-encoded RNA polymerase subunit beta''</fullName>
        <shortName evidence="1">RNA polymerase subunit beta''</shortName>
    </alternativeName>
</protein>
<dbReference type="EC" id="2.7.7.6" evidence="1"/>
<dbReference type="EMBL" id="AF289093">
    <property type="protein sequence ID" value="AAL07336.1"/>
    <property type="status" value="ALT_INIT"/>
    <property type="molecule type" value="Genomic_DNA"/>
</dbReference>
<dbReference type="EMBL" id="DQ317523">
    <property type="protein sequence ID" value="ABC25125.1"/>
    <property type="molecule type" value="Genomic_DNA"/>
</dbReference>
<dbReference type="RefSeq" id="YP_538765.1">
    <property type="nucleotide sequence ID" value="NC_007942.1"/>
</dbReference>
<dbReference type="SMR" id="Q8HVY3"/>
<dbReference type="FunCoup" id="Q8HVY3">
    <property type="interactions" value="96"/>
</dbReference>
<dbReference type="STRING" id="3847.Q8HVY3"/>
<dbReference type="PaxDb" id="3847-GLYMA13G19555.1"/>
<dbReference type="GeneID" id="3989293"/>
<dbReference type="KEGG" id="gmx:3989293"/>
<dbReference type="eggNOG" id="ENOG502QPYA">
    <property type="taxonomic scope" value="Eukaryota"/>
</dbReference>
<dbReference type="InParanoid" id="Q8HVY3"/>
<dbReference type="Proteomes" id="UP000008827">
    <property type="component" value="Chloroplast"/>
</dbReference>
<dbReference type="GO" id="GO:0009507">
    <property type="term" value="C:chloroplast"/>
    <property type="evidence" value="ECO:0007669"/>
    <property type="project" value="UniProtKB-SubCell"/>
</dbReference>
<dbReference type="GO" id="GO:0000428">
    <property type="term" value="C:DNA-directed RNA polymerase complex"/>
    <property type="evidence" value="ECO:0007669"/>
    <property type="project" value="UniProtKB-KW"/>
</dbReference>
<dbReference type="GO" id="GO:0005739">
    <property type="term" value="C:mitochondrion"/>
    <property type="evidence" value="ECO:0007669"/>
    <property type="project" value="GOC"/>
</dbReference>
<dbReference type="GO" id="GO:0003677">
    <property type="term" value="F:DNA binding"/>
    <property type="evidence" value="ECO:0007669"/>
    <property type="project" value="UniProtKB-UniRule"/>
</dbReference>
<dbReference type="GO" id="GO:0003899">
    <property type="term" value="F:DNA-directed RNA polymerase activity"/>
    <property type="evidence" value="ECO:0007669"/>
    <property type="project" value="UniProtKB-UniRule"/>
</dbReference>
<dbReference type="GO" id="GO:0008270">
    <property type="term" value="F:zinc ion binding"/>
    <property type="evidence" value="ECO:0007669"/>
    <property type="project" value="UniProtKB-UniRule"/>
</dbReference>
<dbReference type="GO" id="GO:0006351">
    <property type="term" value="P:DNA-templated transcription"/>
    <property type="evidence" value="ECO:0007669"/>
    <property type="project" value="UniProtKB-UniRule"/>
</dbReference>
<dbReference type="CDD" id="cd02655">
    <property type="entry name" value="RNAP_beta'_C"/>
    <property type="match status" value="1"/>
</dbReference>
<dbReference type="FunFam" id="1.10.132.30:FF:000002">
    <property type="entry name" value="DNA-directed RNA polymerase subunit beta"/>
    <property type="match status" value="1"/>
</dbReference>
<dbReference type="Gene3D" id="1.10.132.30">
    <property type="match status" value="1"/>
</dbReference>
<dbReference type="Gene3D" id="1.10.150.390">
    <property type="match status" value="1"/>
</dbReference>
<dbReference type="Gene3D" id="1.10.1790.20">
    <property type="match status" value="1"/>
</dbReference>
<dbReference type="Gene3D" id="1.10.274.100">
    <property type="entry name" value="RNA polymerase Rpb1, domain 3"/>
    <property type="match status" value="1"/>
</dbReference>
<dbReference type="HAMAP" id="MF_01324">
    <property type="entry name" value="RNApol_bact_RpoC2"/>
    <property type="match status" value="1"/>
</dbReference>
<dbReference type="InterPro" id="IPR012756">
    <property type="entry name" value="DNA-dir_RpoC2_beta_pp"/>
</dbReference>
<dbReference type="InterPro" id="IPR050254">
    <property type="entry name" value="RNA_pol_beta''_euk"/>
</dbReference>
<dbReference type="InterPro" id="IPR042102">
    <property type="entry name" value="RNA_pol_Rpb1_3_sf"/>
</dbReference>
<dbReference type="InterPro" id="IPR007083">
    <property type="entry name" value="RNA_pol_Rpb1_4"/>
</dbReference>
<dbReference type="InterPro" id="IPR007081">
    <property type="entry name" value="RNA_pol_Rpb1_5"/>
</dbReference>
<dbReference type="InterPro" id="IPR038120">
    <property type="entry name" value="Rpb1_funnel_sf"/>
</dbReference>
<dbReference type="NCBIfam" id="TIGR02388">
    <property type="entry name" value="rpoC2_cyan"/>
    <property type="match status" value="1"/>
</dbReference>
<dbReference type="PANTHER" id="PTHR34995">
    <property type="entry name" value="DNA-DIRECTED RNA POLYMERASE SUBUNIT BETA"/>
    <property type="match status" value="1"/>
</dbReference>
<dbReference type="PANTHER" id="PTHR34995:SF1">
    <property type="entry name" value="DNA-DIRECTED RNA POLYMERASE SUBUNIT BETA"/>
    <property type="match status" value="1"/>
</dbReference>
<dbReference type="Pfam" id="PF05000">
    <property type="entry name" value="RNA_pol_Rpb1_4"/>
    <property type="match status" value="1"/>
</dbReference>
<dbReference type="Pfam" id="PF04998">
    <property type="entry name" value="RNA_pol_Rpb1_5"/>
    <property type="match status" value="2"/>
</dbReference>
<dbReference type="SUPFAM" id="SSF64484">
    <property type="entry name" value="beta and beta-prime subunits of DNA dependent RNA-polymerase"/>
    <property type="match status" value="1"/>
</dbReference>